<keyword id="KW-1003">Cell membrane</keyword>
<keyword id="KW-0276">Fatty acid metabolism</keyword>
<keyword id="KW-0436">Ligase</keyword>
<keyword id="KW-0443">Lipid metabolism</keyword>
<keyword id="KW-0472">Membrane</keyword>
<keyword id="KW-1185">Reference proteome</keyword>
<keyword id="KW-0812">Transmembrane</keyword>
<keyword id="KW-1133">Transmembrane helix</keyword>
<dbReference type="EC" id="6.2.1.-"/>
<dbReference type="EMBL" id="AL123456">
    <property type="protein sequence ID" value="CCP44285.1"/>
    <property type="molecule type" value="Genomic_DNA"/>
</dbReference>
<dbReference type="PIR" id="A70723">
    <property type="entry name" value="A70723"/>
</dbReference>
<dbReference type="RefSeq" id="NP_216037.1">
    <property type="nucleotide sequence ID" value="NC_000962.3"/>
</dbReference>
<dbReference type="RefSeq" id="WP_003901187.1">
    <property type="nucleotide sequence ID" value="NZ_NVQJ01000004.1"/>
</dbReference>
<dbReference type="SMR" id="P9WQ45"/>
<dbReference type="FunCoup" id="P9WQ45">
    <property type="interactions" value="9"/>
</dbReference>
<dbReference type="STRING" id="83332.Rv1521"/>
<dbReference type="PaxDb" id="83332-Rv1521"/>
<dbReference type="DNASU" id="886448"/>
<dbReference type="GeneID" id="45425502"/>
<dbReference type="GeneID" id="886448"/>
<dbReference type="KEGG" id="mtu:Rv1521"/>
<dbReference type="KEGG" id="mtv:RVBD_1521"/>
<dbReference type="TubercuList" id="Rv1521"/>
<dbReference type="eggNOG" id="COG0318">
    <property type="taxonomic scope" value="Bacteria"/>
</dbReference>
<dbReference type="InParanoid" id="P9WQ45"/>
<dbReference type="OrthoDB" id="3671040at2"/>
<dbReference type="PhylomeDB" id="P9WQ45"/>
<dbReference type="Proteomes" id="UP000001584">
    <property type="component" value="Chromosome"/>
</dbReference>
<dbReference type="GO" id="GO:0005886">
    <property type="term" value="C:plasma membrane"/>
    <property type="evidence" value="ECO:0007005"/>
    <property type="project" value="MTBBASE"/>
</dbReference>
<dbReference type="GO" id="GO:0070566">
    <property type="term" value="F:adenylyltransferase activity"/>
    <property type="evidence" value="ECO:0000318"/>
    <property type="project" value="GO_Central"/>
</dbReference>
<dbReference type="GO" id="GO:0016874">
    <property type="term" value="F:ligase activity"/>
    <property type="evidence" value="ECO:0007669"/>
    <property type="project" value="UniProtKB-KW"/>
</dbReference>
<dbReference type="GO" id="GO:0071766">
    <property type="term" value="P:Actinobacterium-type cell wall biogenesis"/>
    <property type="evidence" value="ECO:0007669"/>
    <property type="project" value="UniProtKB-ARBA"/>
</dbReference>
<dbReference type="GO" id="GO:0006633">
    <property type="term" value="P:fatty acid biosynthetic process"/>
    <property type="evidence" value="ECO:0000318"/>
    <property type="project" value="GO_Central"/>
</dbReference>
<dbReference type="CDD" id="cd05931">
    <property type="entry name" value="FAAL"/>
    <property type="match status" value="1"/>
</dbReference>
<dbReference type="FunFam" id="3.30.300.30:FF:000016">
    <property type="entry name" value="Fatty-acid-CoA ligase FadD26"/>
    <property type="match status" value="1"/>
</dbReference>
<dbReference type="FunFam" id="3.40.50.12780:FF:000013">
    <property type="entry name" value="Long-chain-fatty-acid--AMP ligase FadD32"/>
    <property type="match status" value="1"/>
</dbReference>
<dbReference type="Gene3D" id="3.30.300.30">
    <property type="match status" value="1"/>
</dbReference>
<dbReference type="Gene3D" id="3.40.50.12780">
    <property type="entry name" value="N-terminal domain of ligase-like"/>
    <property type="match status" value="1"/>
</dbReference>
<dbReference type="InterPro" id="IPR025110">
    <property type="entry name" value="AMP-bd_C"/>
</dbReference>
<dbReference type="InterPro" id="IPR045851">
    <property type="entry name" value="AMP-bd_C_sf"/>
</dbReference>
<dbReference type="InterPro" id="IPR000873">
    <property type="entry name" value="AMP-dep_synth/lig_dom"/>
</dbReference>
<dbReference type="InterPro" id="IPR042099">
    <property type="entry name" value="ANL_N_sf"/>
</dbReference>
<dbReference type="InterPro" id="IPR040097">
    <property type="entry name" value="FAAL/FAAC"/>
</dbReference>
<dbReference type="NCBIfam" id="NF004509">
    <property type="entry name" value="PRK05850.1"/>
    <property type="match status" value="1"/>
</dbReference>
<dbReference type="PANTHER" id="PTHR22754:SF32">
    <property type="entry name" value="DISCO-INTERACTING PROTEIN 2"/>
    <property type="match status" value="1"/>
</dbReference>
<dbReference type="PANTHER" id="PTHR22754">
    <property type="entry name" value="DISCO-INTERACTING PROTEIN 2 DIP2 -RELATED"/>
    <property type="match status" value="1"/>
</dbReference>
<dbReference type="Pfam" id="PF00501">
    <property type="entry name" value="AMP-binding"/>
    <property type="match status" value="1"/>
</dbReference>
<dbReference type="Pfam" id="PF23024">
    <property type="entry name" value="AMP-dom_DIP2-like"/>
    <property type="match status" value="1"/>
</dbReference>
<dbReference type="SUPFAM" id="SSF56801">
    <property type="entry name" value="Acetyl-CoA synthetase-like"/>
    <property type="match status" value="1"/>
</dbReference>
<name>FAD25_MYCTU</name>
<proteinExistence type="evidence at protein level"/>
<organism>
    <name type="scientific">Mycobacterium tuberculosis (strain ATCC 25618 / H37Rv)</name>
    <dbReference type="NCBI Taxonomy" id="83332"/>
    <lineage>
        <taxon>Bacteria</taxon>
        <taxon>Bacillati</taxon>
        <taxon>Actinomycetota</taxon>
        <taxon>Actinomycetes</taxon>
        <taxon>Mycobacteriales</taxon>
        <taxon>Mycobacteriaceae</taxon>
        <taxon>Mycobacterium</taxon>
        <taxon>Mycobacterium tuberculosis complex</taxon>
    </lineage>
</organism>
<sequence length="583" mass="63142">MSVVESSLPGVLRERASFQPNDKALTFIDYERSWDGVEETLTWSQLYRRTLNLAAQLREHGSTGDRALILAPQSLDYVVSFIASLQAGIVAVPLSIPQGGAHDERTVSVFADTAPAIVLTASSVVDNVVEYVQPQPGQNAPAVIEVDRLDLDARPSSGSRSAAHGHPDILYLQYTSGSTRTPAGVMVSNKNLFANFEQIMTSYYGVYGKVAPPGSTVVSWLPFYHDMGFVLGLILPILAGIPAVLTSPIGFLQRPARWIQMLASNTLAFTAAPNFAFDLASRKTKDEDMEGLDLGGVHGILNGSERVQPVTLKRFIDRFAPFNLDPKAIRPSYGMAEATVYVATRKAGQPPKIVQFDPQKLPDGQAERTESDGGTPLVSYGIVDTQLVRIVDPDTGIERPAGTIGEIWVHGDNVAIGYWQKPEATERTFSATIVNPSEGTPAGPWLRTGDSGFLSEGELFIMGRIKDLLIVYGRNHSPDDIEATIQTISPGRCAAIAVSEHGAEKLVAIIELKKKDESDDEAAERLGFVKREVTSAISKSHGLSVADLVLVSPGSIPITTSGKIRRAQCVELYRQDEFTRLDA</sequence>
<feature type="chain" id="PRO_0000193137" description="Putative fatty-acid--CoA ligase fadD25">
    <location>
        <begin position="1"/>
        <end position="583"/>
    </location>
</feature>
<feature type="transmembrane region" description="Helical" evidence="1">
    <location>
        <begin position="77"/>
        <end position="97"/>
    </location>
</feature>
<feature type="transmembrane region" description="Helical" evidence="1">
    <location>
        <begin position="109"/>
        <end position="129"/>
    </location>
</feature>
<feature type="transmembrane region" description="Helical" evidence="1">
    <location>
        <begin position="229"/>
        <end position="249"/>
    </location>
</feature>
<feature type="region of interest" description="Disordered" evidence="2">
    <location>
        <begin position="353"/>
        <end position="375"/>
    </location>
</feature>
<reference key="1">
    <citation type="journal article" date="1998" name="Nature">
        <title>Deciphering the biology of Mycobacterium tuberculosis from the complete genome sequence.</title>
        <authorList>
            <person name="Cole S.T."/>
            <person name="Brosch R."/>
            <person name="Parkhill J."/>
            <person name="Garnier T."/>
            <person name="Churcher C.M."/>
            <person name="Harris D.E."/>
            <person name="Gordon S.V."/>
            <person name="Eiglmeier K."/>
            <person name="Gas S."/>
            <person name="Barry C.E. III"/>
            <person name="Tekaia F."/>
            <person name="Badcock K."/>
            <person name="Basham D."/>
            <person name="Brown D."/>
            <person name="Chillingworth T."/>
            <person name="Connor R."/>
            <person name="Davies R.M."/>
            <person name="Devlin K."/>
            <person name="Feltwell T."/>
            <person name="Gentles S."/>
            <person name="Hamlin N."/>
            <person name="Holroyd S."/>
            <person name="Hornsby T."/>
            <person name="Jagels K."/>
            <person name="Krogh A."/>
            <person name="McLean J."/>
            <person name="Moule S."/>
            <person name="Murphy L.D."/>
            <person name="Oliver S."/>
            <person name="Osborne J."/>
            <person name="Quail M.A."/>
            <person name="Rajandream M.A."/>
            <person name="Rogers J."/>
            <person name="Rutter S."/>
            <person name="Seeger K."/>
            <person name="Skelton S."/>
            <person name="Squares S."/>
            <person name="Squares R."/>
            <person name="Sulston J.E."/>
            <person name="Taylor K."/>
            <person name="Whitehead S."/>
            <person name="Barrell B.G."/>
        </authorList>
    </citation>
    <scope>NUCLEOTIDE SEQUENCE [LARGE SCALE GENOMIC DNA]</scope>
    <source>
        <strain>ATCC 25618 / H37Rv</strain>
    </source>
</reference>
<reference key="2">
    <citation type="journal article" date="2011" name="Mol. Cell. Proteomics">
        <title>Proteogenomic analysis of Mycobacterium tuberculosis by high resolution mass spectrometry.</title>
        <authorList>
            <person name="Kelkar D.S."/>
            <person name="Kumar D."/>
            <person name="Kumar P."/>
            <person name="Balakrishnan L."/>
            <person name="Muthusamy B."/>
            <person name="Yadav A.K."/>
            <person name="Shrivastava P."/>
            <person name="Marimuthu A."/>
            <person name="Anand S."/>
            <person name="Sundaram H."/>
            <person name="Kingsbury R."/>
            <person name="Harsha H.C."/>
            <person name="Nair B."/>
            <person name="Prasad T.S."/>
            <person name="Chauhan D.S."/>
            <person name="Katoch K."/>
            <person name="Katoch V.M."/>
            <person name="Kumar P."/>
            <person name="Chaerkady R."/>
            <person name="Ramachandran S."/>
            <person name="Dash D."/>
            <person name="Pandey A."/>
        </authorList>
    </citation>
    <scope>IDENTIFICATION BY MASS SPECTROMETRY [LARGE SCALE ANALYSIS]</scope>
    <source>
        <strain>ATCC 25618 / H37Rv</strain>
    </source>
</reference>
<gene>
    <name type="primary">fadD25</name>
    <name type="ordered locus">Rv1521</name>
    <name type="ORF">MTCY19G5.07</name>
</gene>
<comment type="subcellular location">
    <subcellularLocation>
        <location evidence="3">Cell membrane</location>
        <topology evidence="3">Multi-pass membrane protein</topology>
    </subcellularLocation>
</comment>
<comment type="similarity">
    <text evidence="3">Belongs to the ATP-dependent AMP-binding enzyme family.</text>
</comment>
<accession>P9WQ45</accession>
<accession>L0T8I2</accession>
<accession>Q50586</accession>
<protein>
    <recommendedName>
        <fullName>Putative fatty-acid--CoA ligase fadD25</fullName>
        <ecNumber>6.2.1.-</ecNumber>
    </recommendedName>
    <alternativeName>
        <fullName>Acyl-CoA synthetase</fullName>
    </alternativeName>
</protein>
<evidence type="ECO:0000255" key="1"/>
<evidence type="ECO:0000256" key="2">
    <source>
        <dbReference type="SAM" id="MobiDB-lite"/>
    </source>
</evidence>
<evidence type="ECO:0000305" key="3"/>